<name>NTPP_MYCLE</name>
<feature type="chain" id="PRO_0000123029" description="Nucleoside triphosphate pyrophosphatase">
    <location>
        <begin position="1"/>
        <end position="213"/>
    </location>
</feature>
<feature type="active site" description="Proton acceptor" evidence="1">
    <location>
        <position position="79"/>
    </location>
</feature>
<keyword id="KW-0963">Cytoplasm</keyword>
<keyword id="KW-0378">Hydrolase</keyword>
<keyword id="KW-0546">Nucleotide metabolism</keyword>
<keyword id="KW-1185">Reference proteome</keyword>
<accession>Q49670</accession>
<proteinExistence type="inferred from homology"/>
<evidence type="ECO:0000255" key="1">
    <source>
        <dbReference type="HAMAP-Rule" id="MF_00528"/>
    </source>
</evidence>
<reference key="1">
    <citation type="submission" date="1994-03" db="EMBL/GenBank/DDBJ databases">
        <authorList>
            <person name="Smith D.R."/>
            <person name="Robison K."/>
        </authorList>
    </citation>
    <scope>NUCLEOTIDE SEQUENCE [GENOMIC DNA]</scope>
</reference>
<reference key="2">
    <citation type="journal article" date="2001" name="Nature">
        <title>Massive gene decay in the leprosy bacillus.</title>
        <authorList>
            <person name="Cole S.T."/>
            <person name="Eiglmeier K."/>
            <person name="Parkhill J."/>
            <person name="James K.D."/>
            <person name="Thomson N.R."/>
            <person name="Wheeler P.R."/>
            <person name="Honore N."/>
            <person name="Garnier T."/>
            <person name="Churcher C.M."/>
            <person name="Harris D.E."/>
            <person name="Mungall K.L."/>
            <person name="Basham D."/>
            <person name="Brown D."/>
            <person name="Chillingworth T."/>
            <person name="Connor R."/>
            <person name="Davies R.M."/>
            <person name="Devlin K."/>
            <person name="Duthoy S."/>
            <person name="Feltwell T."/>
            <person name="Fraser A."/>
            <person name="Hamlin N."/>
            <person name="Holroyd S."/>
            <person name="Hornsby T."/>
            <person name="Jagels K."/>
            <person name="Lacroix C."/>
            <person name="Maclean J."/>
            <person name="Moule S."/>
            <person name="Murphy L.D."/>
            <person name="Oliver K."/>
            <person name="Quail M.A."/>
            <person name="Rajandream M.A."/>
            <person name="Rutherford K.M."/>
            <person name="Rutter S."/>
            <person name="Seeger K."/>
            <person name="Simon S."/>
            <person name="Simmonds M."/>
            <person name="Skelton J."/>
            <person name="Squares R."/>
            <person name="Squares S."/>
            <person name="Stevens K."/>
            <person name="Taylor K."/>
            <person name="Whitehead S."/>
            <person name="Woodward J.R."/>
            <person name="Barrell B.G."/>
        </authorList>
    </citation>
    <scope>NUCLEOTIDE SEQUENCE [LARGE SCALE GENOMIC DNA]</scope>
    <source>
        <strain>TN</strain>
    </source>
</reference>
<organism>
    <name type="scientific">Mycobacterium leprae (strain TN)</name>
    <dbReference type="NCBI Taxonomy" id="272631"/>
    <lineage>
        <taxon>Bacteria</taxon>
        <taxon>Bacillati</taxon>
        <taxon>Actinomycetota</taxon>
        <taxon>Actinomycetes</taxon>
        <taxon>Mycobacteriales</taxon>
        <taxon>Mycobacteriaceae</taxon>
        <taxon>Mycobacterium</taxon>
    </lineage>
</organism>
<protein>
    <recommendedName>
        <fullName evidence="1">Nucleoside triphosphate pyrophosphatase</fullName>
        <ecNumber evidence="1">3.6.1.9</ecNumber>
    </recommendedName>
    <alternativeName>
        <fullName evidence="1">Nucleotide pyrophosphatase</fullName>
        <shortName evidence="1">Nucleotide PPase</shortName>
    </alternativeName>
</protein>
<comment type="function">
    <text evidence="1">Nucleoside triphosphate pyrophosphatase. May have a dual role in cell division arrest and in preventing the incorporation of modified nucleotides into cellular nucleic acids.</text>
</comment>
<comment type="catalytic activity">
    <reaction evidence="1">
        <text>a ribonucleoside 5'-triphosphate + H2O = a ribonucleoside 5'-phosphate + diphosphate + H(+)</text>
        <dbReference type="Rhea" id="RHEA:23996"/>
        <dbReference type="ChEBI" id="CHEBI:15377"/>
        <dbReference type="ChEBI" id="CHEBI:15378"/>
        <dbReference type="ChEBI" id="CHEBI:33019"/>
        <dbReference type="ChEBI" id="CHEBI:58043"/>
        <dbReference type="ChEBI" id="CHEBI:61557"/>
        <dbReference type="EC" id="3.6.1.9"/>
    </reaction>
</comment>
<comment type="catalytic activity">
    <reaction evidence="1">
        <text>a 2'-deoxyribonucleoside 5'-triphosphate + H2O = a 2'-deoxyribonucleoside 5'-phosphate + diphosphate + H(+)</text>
        <dbReference type="Rhea" id="RHEA:44644"/>
        <dbReference type="ChEBI" id="CHEBI:15377"/>
        <dbReference type="ChEBI" id="CHEBI:15378"/>
        <dbReference type="ChEBI" id="CHEBI:33019"/>
        <dbReference type="ChEBI" id="CHEBI:61560"/>
        <dbReference type="ChEBI" id="CHEBI:65317"/>
        <dbReference type="EC" id="3.6.1.9"/>
    </reaction>
</comment>
<comment type="cofactor">
    <cofactor evidence="1">
        <name>a divalent metal cation</name>
        <dbReference type="ChEBI" id="CHEBI:60240"/>
    </cofactor>
</comment>
<comment type="subcellular location">
    <subcellularLocation>
        <location evidence="1">Cytoplasm</location>
    </subcellularLocation>
</comment>
<comment type="similarity">
    <text evidence="1">Belongs to the Maf family.</text>
</comment>
<sequence length="213" mass="22061">MTRLVLGSASAGRLKVLRQAGIDPLVAASGVDEDLVTAGLGSDTSPRDVVSTLARAKATQVAAALSHAVADDCVVISCDSQLSIDGRLYGKPQSVANARQQWQSMAGRAGQLYTGHCVIRLLNNETTYSVDETSMTTICFGNPSAEDLEAYLACGESLQVAGGFTLDGLGGWFIDAVYGDPSTVVGIGLPLTRSLLSRAGLSIAAMWAANPVI</sequence>
<gene>
    <name type="ordered locus">ML0729</name>
    <name type="ORF">B1308_C2_167</name>
    <name type="ORF">u1308r</name>
</gene>
<dbReference type="EC" id="3.6.1.9" evidence="1"/>
<dbReference type="EMBL" id="U00012">
    <property type="protein sequence ID" value="AAA85927.1"/>
    <property type="molecule type" value="Genomic_DNA"/>
</dbReference>
<dbReference type="EMBL" id="AL583919">
    <property type="protein sequence ID" value="CAC30238.1"/>
    <property type="molecule type" value="Genomic_DNA"/>
</dbReference>
<dbReference type="PIR" id="B87000">
    <property type="entry name" value="B87000"/>
</dbReference>
<dbReference type="RefSeq" id="NP_301569.1">
    <property type="nucleotide sequence ID" value="NC_002677.1"/>
</dbReference>
<dbReference type="RefSeq" id="WP_010907893.1">
    <property type="nucleotide sequence ID" value="NC_002677.1"/>
</dbReference>
<dbReference type="SMR" id="Q49670"/>
<dbReference type="STRING" id="272631.gene:17574553"/>
<dbReference type="KEGG" id="mle:ML0729"/>
<dbReference type="PATRIC" id="fig|272631.5.peg.1326"/>
<dbReference type="Leproma" id="ML0729"/>
<dbReference type="eggNOG" id="COG0424">
    <property type="taxonomic scope" value="Bacteria"/>
</dbReference>
<dbReference type="HOGENOM" id="CLU_040416_1_2_11"/>
<dbReference type="OrthoDB" id="3527985at2"/>
<dbReference type="Proteomes" id="UP000000806">
    <property type="component" value="Chromosome"/>
</dbReference>
<dbReference type="GO" id="GO:0005737">
    <property type="term" value="C:cytoplasm"/>
    <property type="evidence" value="ECO:0007669"/>
    <property type="project" value="UniProtKB-SubCell"/>
</dbReference>
<dbReference type="GO" id="GO:0047429">
    <property type="term" value="F:nucleoside triphosphate diphosphatase activity"/>
    <property type="evidence" value="ECO:0007669"/>
    <property type="project" value="UniProtKB-EC"/>
</dbReference>
<dbReference type="GO" id="GO:0009117">
    <property type="term" value="P:nucleotide metabolic process"/>
    <property type="evidence" value="ECO:0007669"/>
    <property type="project" value="UniProtKB-KW"/>
</dbReference>
<dbReference type="CDD" id="cd00555">
    <property type="entry name" value="Maf"/>
    <property type="match status" value="1"/>
</dbReference>
<dbReference type="Gene3D" id="3.90.950.10">
    <property type="match status" value="1"/>
</dbReference>
<dbReference type="HAMAP" id="MF_00528">
    <property type="entry name" value="Maf"/>
    <property type="match status" value="1"/>
</dbReference>
<dbReference type="InterPro" id="IPR029001">
    <property type="entry name" value="ITPase-like_fam"/>
</dbReference>
<dbReference type="InterPro" id="IPR003697">
    <property type="entry name" value="Maf-like"/>
</dbReference>
<dbReference type="NCBIfam" id="TIGR00172">
    <property type="entry name" value="maf"/>
    <property type="match status" value="1"/>
</dbReference>
<dbReference type="PANTHER" id="PTHR43213">
    <property type="entry name" value="BIFUNCTIONAL DTTP/UTP PYROPHOSPHATASE/METHYLTRANSFERASE PROTEIN-RELATED"/>
    <property type="match status" value="1"/>
</dbReference>
<dbReference type="PANTHER" id="PTHR43213:SF5">
    <property type="entry name" value="BIFUNCTIONAL DTTP_UTP PYROPHOSPHATASE_METHYLTRANSFERASE PROTEIN-RELATED"/>
    <property type="match status" value="1"/>
</dbReference>
<dbReference type="Pfam" id="PF02545">
    <property type="entry name" value="Maf"/>
    <property type="match status" value="1"/>
</dbReference>
<dbReference type="PIRSF" id="PIRSF006305">
    <property type="entry name" value="Maf"/>
    <property type="match status" value="1"/>
</dbReference>
<dbReference type="SUPFAM" id="SSF52972">
    <property type="entry name" value="ITPase-like"/>
    <property type="match status" value="1"/>
</dbReference>